<evidence type="ECO:0000255" key="1">
    <source>
        <dbReference type="HAMAP-Rule" id="MF_00099"/>
    </source>
</evidence>
<evidence type="ECO:0000256" key="2">
    <source>
        <dbReference type="SAM" id="MobiDB-lite"/>
    </source>
</evidence>
<comment type="function">
    <text evidence="1">Involved in chemotaxis. Part of a chemotaxis signal transduction system that modulates chemotaxis in response to various stimuli. Catalyzes the demethylation of specific methylglutamate residues introduced into the chemoreceptors (methyl-accepting chemotaxis proteins or MCP) by CheR. Also mediates the irreversible deamidation of specific glutamine residues to glutamic acid.</text>
</comment>
<comment type="catalytic activity">
    <reaction evidence="1">
        <text>[protein]-L-glutamate 5-O-methyl ester + H2O = L-glutamyl-[protein] + methanol + H(+)</text>
        <dbReference type="Rhea" id="RHEA:23236"/>
        <dbReference type="Rhea" id="RHEA-COMP:10208"/>
        <dbReference type="Rhea" id="RHEA-COMP:10311"/>
        <dbReference type="ChEBI" id="CHEBI:15377"/>
        <dbReference type="ChEBI" id="CHEBI:15378"/>
        <dbReference type="ChEBI" id="CHEBI:17790"/>
        <dbReference type="ChEBI" id="CHEBI:29973"/>
        <dbReference type="ChEBI" id="CHEBI:82795"/>
        <dbReference type="EC" id="3.1.1.61"/>
    </reaction>
</comment>
<comment type="catalytic activity">
    <reaction evidence="1">
        <text>L-glutaminyl-[protein] + H2O = L-glutamyl-[protein] + NH4(+)</text>
        <dbReference type="Rhea" id="RHEA:16441"/>
        <dbReference type="Rhea" id="RHEA-COMP:10207"/>
        <dbReference type="Rhea" id="RHEA-COMP:10208"/>
        <dbReference type="ChEBI" id="CHEBI:15377"/>
        <dbReference type="ChEBI" id="CHEBI:28938"/>
        <dbReference type="ChEBI" id="CHEBI:29973"/>
        <dbReference type="ChEBI" id="CHEBI:30011"/>
        <dbReference type="EC" id="3.5.1.44"/>
    </reaction>
</comment>
<comment type="subcellular location">
    <subcellularLocation>
        <location evidence="1">Cytoplasm</location>
    </subcellularLocation>
</comment>
<comment type="domain">
    <text evidence="1">Contains a C-terminal catalytic domain, and an N-terminal region which modulates catalytic activity.</text>
</comment>
<comment type="PTM">
    <text evidence="1">Phosphorylated by CheA. Phosphorylation of the N-terminal regulatory domain activates the methylesterase activity.</text>
</comment>
<comment type="similarity">
    <text evidence="1">Belongs to the CheB family.</text>
</comment>
<reference key="1">
    <citation type="submission" date="2005-09" db="EMBL/GenBank/DDBJ databases">
        <title>Complete sequence of chromosome 1 of Rhodobacter sphaeroides 2.4.1.</title>
        <authorList>
            <person name="Copeland A."/>
            <person name="Lucas S."/>
            <person name="Lapidus A."/>
            <person name="Barry K."/>
            <person name="Detter J.C."/>
            <person name="Glavina T."/>
            <person name="Hammon N."/>
            <person name="Israni S."/>
            <person name="Pitluck S."/>
            <person name="Richardson P."/>
            <person name="Mackenzie C."/>
            <person name="Choudhary M."/>
            <person name="Larimer F."/>
            <person name="Hauser L.J."/>
            <person name="Land M."/>
            <person name="Donohue T.J."/>
            <person name="Kaplan S."/>
        </authorList>
    </citation>
    <scope>NUCLEOTIDE SEQUENCE [LARGE SCALE GENOMIC DNA]</scope>
    <source>
        <strain>ATCC 17023 / DSM 158 / JCM 6121 / CCUG 31486 / LMG 2827 / NBRC 12203 / NCIMB 8253 / ATH 2.4.1.</strain>
    </source>
</reference>
<name>CHEB1_CERS4</name>
<organism>
    <name type="scientific">Cereibacter sphaeroides (strain ATCC 17023 / DSM 158 / JCM 6121 / CCUG 31486 / LMG 2827 / NBRC 12203 / NCIMB 8253 / ATH 2.4.1.)</name>
    <name type="common">Rhodobacter sphaeroides</name>
    <dbReference type="NCBI Taxonomy" id="272943"/>
    <lineage>
        <taxon>Bacteria</taxon>
        <taxon>Pseudomonadati</taxon>
        <taxon>Pseudomonadota</taxon>
        <taxon>Alphaproteobacteria</taxon>
        <taxon>Rhodobacterales</taxon>
        <taxon>Paracoccaceae</taxon>
        <taxon>Cereibacter</taxon>
    </lineage>
</organism>
<accession>Q3J653</accession>
<gene>
    <name evidence="1" type="primary">cheB1</name>
    <name type="ordered locus">RHOS4_01630</name>
    <name type="ORF">RSP_1588</name>
</gene>
<keyword id="KW-0145">Chemotaxis</keyword>
<keyword id="KW-0963">Cytoplasm</keyword>
<keyword id="KW-0378">Hydrolase</keyword>
<keyword id="KW-0597">Phosphoprotein</keyword>
<keyword id="KW-1185">Reference proteome</keyword>
<proteinExistence type="inferred from homology"/>
<feature type="chain" id="PRO_0000225481" description="Protein-glutamate methylesterase/protein-glutamine glutaminase 1">
    <location>
        <begin position="1"/>
        <end position="369"/>
    </location>
</feature>
<feature type="domain" description="Response regulatory" evidence="1">
    <location>
        <begin position="11"/>
        <end position="128"/>
    </location>
</feature>
<feature type="domain" description="CheB-type methylesterase" evidence="1">
    <location>
        <begin position="170"/>
        <end position="358"/>
    </location>
</feature>
<feature type="region of interest" description="Disordered" evidence="2">
    <location>
        <begin position="136"/>
        <end position="168"/>
    </location>
</feature>
<feature type="active site" evidence="1">
    <location>
        <position position="183"/>
    </location>
</feature>
<feature type="active site" evidence="1">
    <location>
        <position position="209"/>
    </location>
</feature>
<feature type="active site" evidence="1">
    <location>
        <position position="305"/>
    </location>
</feature>
<feature type="modified residue" description="4-aspartylphosphate" evidence="1">
    <location>
        <position position="62"/>
    </location>
</feature>
<protein>
    <recommendedName>
        <fullName evidence="1">Protein-glutamate methylesterase/protein-glutamine glutaminase 1</fullName>
        <ecNumber evidence="1">3.1.1.61</ecNumber>
        <ecNumber evidence="1">3.5.1.44</ecNumber>
    </recommendedName>
</protein>
<sequence length="369" mass="39605">MTTHAAAPSTRVLIVDDSAAARAMFKVIVESDPALQVMAAVPDAFAAARAMRTELPDVILLDLELPGMDGLTFLRKIMQQHPIPVVVCSSHVGAGTEAMVSALELGAREVISKPAARNDLERQEASIRICDAIRAATETTRRRSQPEPRPLAPGPKLTADEILPARPPRPVPETMPVVCIGASTGGTEALRDVLTALPASAPPIVIVQHMPRGFTAAFARRLDSLCAIEVLEAEDEMQVMPGRAIIAQGDRHLLLRRRNQGYRVSVLDGAYVCRHRPSVDVLFRSAAQEAGGNALGVIMTGMGDDGARCMAEMRAAGAETIAQNEESCVVYGMPREAVAHGGVGKVEPLDRLAARIMEFGRRHTERTVR</sequence>
<dbReference type="EC" id="3.1.1.61" evidence="1"/>
<dbReference type="EC" id="3.5.1.44" evidence="1"/>
<dbReference type="EMBL" id="CP000143">
    <property type="protein sequence ID" value="ABA77731.1"/>
    <property type="molecule type" value="Genomic_DNA"/>
</dbReference>
<dbReference type="RefSeq" id="WP_011336855.1">
    <property type="nucleotide sequence ID" value="NZ_CP030271.1"/>
</dbReference>
<dbReference type="RefSeq" id="YP_351632.1">
    <property type="nucleotide sequence ID" value="NC_007493.2"/>
</dbReference>
<dbReference type="SMR" id="Q3J653"/>
<dbReference type="STRING" id="272943.RSP_1588"/>
<dbReference type="EnsemblBacteria" id="ABA77731">
    <property type="protein sequence ID" value="ABA77731"/>
    <property type="gene ID" value="RSP_1588"/>
</dbReference>
<dbReference type="GeneID" id="3718577"/>
<dbReference type="KEGG" id="rsp:RSP_1588"/>
<dbReference type="PATRIC" id="fig|272943.9.peg.465"/>
<dbReference type="eggNOG" id="COG2201">
    <property type="taxonomic scope" value="Bacteria"/>
</dbReference>
<dbReference type="OrthoDB" id="9793421at2"/>
<dbReference type="PhylomeDB" id="Q3J653"/>
<dbReference type="Proteomes" id="UP000002703">
    <property type="component" value="Chromosome 1"/>
</dbReference>
<dbReference type="GO" id="GO:0005737">
    <property type="term" value="C:cytoplasm"/>
    <property type="evidence" value="ECO:0007669"/>
    <property type="project" value="UniProtKB-SubCell"/>
</dbReference>
<dbReference type="GO" id="GO:0000156">
    <property type="term" value="F:phosphorelay response regulator activity"/>
    <property type="evidence" value="ECO:0007669"/>
    <property type="project" value="InterPro"/>
</dbReference>
<dbReference type="GO" id="GO:0008984">
    <property type="term" value="F:protein-glutamate methylesterase activity"/>
    <property type="evidence" value="ECO:0007669"/>
    <property type="project" value="UniProtKB-UniRule"/>
</dbReference>
<dbReference type="GO" id="GO:0050568">
    <property type="term" value="F:protein-glutamine glutaminase activity"/>
    <property type="evidence" value="ECO:0007669"/>
    <property type="project" value="UniProtKB-UniRule"/>
</dbReference>
<dbReference type="GO" id="GO:0006935">
    <property type="term" value="P:chemotaxis"/>
    <property type="evidence" value="ECO:0007669"/>
    <property type="project" value="UniProtKB-UniRule"/>
</dbReference>
<dbReference type="CDD" id="cd16432">
    <property type="entry name" value="CheB_Rec"/>
    <property type="match status" value="1"/>
</dbReference>
<dbReference type="CDD" id="cd17541">
    <property type="entry name" value="REC_CheB-like"/>
    <property type="match status" value="1"/>
</dbReference>
<dbReference type="Gene3D" id="3.40.50.2300">
    <property type="match status" value="1"/>
</dbReference>
<dbReference type="Gene3D" id="3.40.50.180">
    <property type="entry name" value="Methylesterase CheB, C-terminal domain"/>
    <property type="match status" value="1"/>
</dbReference>
<dbReference type="HAMAP" id="MF_00099">
    <property type="entry name" value="CheB_chemtxs"/>
    <property type="match status" value="1"/>
</dbReference>
<dbReference type="InterPro" id="IPR008248">
    <property type="entry name" value="CheB-like"/>
</dbReference>
<dbReference type="InterPro" id="IPR035909">
    <property type="entry name" value="CheB_C"/>
</dbReference>
<dbReference type="InterPro" id="IPR011006">
    <property type="entry name" value="CheY-like_superfamily"/>
</dbReference>
<dbReference type="InterPro" id="IPR000673">
    <property type="entry name" value="Sig_transdc_resp-reg_Me-estase"/>
</dbReference>
<dbReference type="InterPro" id="IPR001789">
    <property type="entry name" value="Sig_transdc_resp-reg_receiver"/>
</dbReference>
<dbReference type="NCBIfam" id="NF001965">
    <property type="entry name" value="PRK00742.1"/>
    <property type="match status" value="1"/>
</dbReference>
<dbReference type="NCBIfam" id="NF009206">
    <property type="entry name" value="PRK12555.1"/>
    <property type="match status" value="1"/>
</dbReference>
<dbReference type="PANTHER" id="PTHR42872">
    <property type="entry name" value="PROTEIN-GLUTAMATE METHYLESTERASE/PROTEIN-GLUTAMINE GLUTAMINASE"/>
    <property type="match status" value="1"/>
</dbReference>
<dbReference type="PANTHER" id="PTHR42872:SF6">
    <property type="entry name" value="PROTEIN-GLUTAMATE METHYLESTERASE_PROTEIN-GLUTAMINE GLUTAMINASE"/>
    <property type="match status" value="1"/>
</dbReference>
<dbReference type="Pfam" id="PF01339">
    <property type="entry name" value="CheB_methylest"/>
    <property type="match status" value="1"/>
</dbReference>
<dbReference type="Pfam" id="PF00072">
    <property type="entry name" value="Response_reg"/>
    <property type="match status" value="1"/>
</dbReference>
<dbReference type="PIRSF" id="PIRSF000876">
    <property type="entry name" value="RR_chemtxs_CheB"/>
    <property type="match status" value="1"/>
</dbReference>
<dbReference type="SMART" id="SM00448">
    <property type="entry name" value="REC"/>
    <property type="match status" value="1"/>
</dbReference>
<dbReference type="SUPFAM" id="SSF52172">
    <property type="entry name" value="CheY-like"/>
    <property type="match status" value="1"/>
</dbReference>
<dbReference type="SUPFAM" id="SSF52738">
    <property type="entry name" value="Methylesterase CheB, C-terminal domain"/>
    <property type="match status" value="1"/>
</dbReference>
<dbReference type="PROSITE" id="PS50122">
    <property type="entry name" value="CHEB"/>
    <property type="match status" value="1"/>
</dbReference>
<dbReference type="PROSITE" id="PS50110">
    <property type="entry name" value="RESPONSE_REGULATORY"/>
    <property type="match status" value="1"/>
</dbReference>